<keyword id="KW-0002">3D-structure</keyword>
<keyword id="KW-0963">Cytoplasm</keyword>
<keyword id="KW-0539">Nucleus</keyword>
<keyword id="KW-1185">Reference proteome</keyword>
<keyword id="KW-0808">Transferase</keyword>
<keyword id="KW-0833">Ubl conjugation pathway</keyword>
<gene>
    <name type="primary">UFD2</name>
    <name type="ordered locus">YDL190C</name>
    <name type="ORF">D1255</name>
</gene>
<dbReference type="EC" id="2.3.2.27" evidence="1"/>
<dbReference type="EMBL" id="U22154">
    <property type="protein sequence ID" value="AAC49024.1"/>
    <property type="molecule type" value="Genomic_DNA"/>
</dbReference>
<dbReference type="EMBL" id="X83276">
    <property type="protein sequence ID" value="CAA58257.1"/>
    <property type="molecule type" value="Genomic_DNA"/>
</dbReference>
<dbReference type="EMBL" id="Z74238">
    <property type="protein sequence ID" value="CAA98767.1"/>
    <property type="molecule type" value="Genomic_DNA"/>
</dbReference>
<dbReference type="EMBL" id="BK006938">
    <property type="protein sequence ID" value="DAA11673.2"/>
    <property type="molecule type" value="Genomic_DNA"/>
</dbReference>
<dbReference type="PIR" id="S58787">
    <property type="entry name" value="S58787"/>
</dbReference>
<dbReference type="RefSeq" id="NP_010091.2">
    <property type="nucleotide sequence ID" value="NM_001180250.2"/>
</dbReference>
<dbReference type="PDB" id="2QIZ">
    <property type="method" value="X-ray"/>
    <property type="resolution" value="2.56 A"/>
    <property type="chains" value="A=1-961"/>
</dbReference>
<dbReference type="PDB" id="2QJ0">
    <property type="method" value="X-ray"/>
    <property type="resolution" value="2.65 A"/>
    <property type="chains" value="A=1-961"/>
</dbReference>
<dbReference type="PDB" id="3M62">
    <property type="method" value="X-ray"/>
    <property type="resolution" value="2.40 A"/>
    <property type="chains" value="A=1-961"/>
</dbReference>
<dbReference type="PDB" id="3M63">
    <property type="method" value="X-ray"/>
    <property type="resolution" value="2.40 A"/>
    <property type="chains" value="A=1-961"/>
</dbReference>
<dbReference type="PDBsum" id="2QIZ"/>
<dbReference type="PDBsum" id="2QJ0"/>
<dbReference type="PDBsum" id="3M62"/>
<dbReference type="PDBsum" id="3M63"/>
<dbReference type="SMR" id="P54860"/>
<dbReference type="BioGRID" id="31855">
    <property type="interactions" value="243"/>
</dbReference>
<dbReference type="ComplexPortal" id="CPX-1323">
    <property type="entry name" value="CDC48-RAD23-UFD2 complex"/>
</dbReference>
<dbReference type="DIP" id="DIP-5925N"/>
<dbReference type="FunCoup" id="P54860">
    <property type="interactions" value="1499"/>
</dbReference>
<dbReference type="IntAct" id="P54860">
    <property type="interactions" value="22"/>
</dbReference>
<dbReference type="MINT" id="P54860"/>
<dbReference type="STRING" id="4932.YDL190C"/>
<dbReference type="iPTMnet" id="P54860"/>
<dbReference type="PaxDb" id="4932-YDL190C"/>
<dbReference type="PeptideAtlas" id="P54860"/>
<dbReference type="EnsemblFungi" id="YDL190C_mRNA">
    <property type="protein sequence ID" value="YDL190C"/>
    <property type="gene ID" value="YDL190C"/>
</dbReference>
<dbReference type="GeneID" id="851337"/>
<dbReference type="KEGG" id="sce:YDL190C"/>
<dbReference type="AGR" id="SGD:S000002349"/>
<dbReference type="SGD" id="S000002349">
    <property type="gene designation" value="UFD2"/>
</dbReference>
<dbReference type="VEuPathDB" id="FungiDB:YDL190C"/>
<dbReference type="eggNOG" id="KOG2042">
    <property type="taxonomic scope" value="Eukaryota"/>
</dbReference>
<dbReference type="GeneTree" id="ENSGT00390000009300"/>
<dbReference type="HOGENOM" id="CLU_003224_0_1_1"/>
<dbReference type="InParanoid" id="P54860"/>
<dbReference type="OMA" id="SNAFMTN"/>
<dbReference type="OrthoDB" id="20295at2759"/>
<dbReference type="BioCyc" id="YEAST:G3O-29575-MONOMER"/>
<dbReference type="BRENDA" id="2.3.2.B12">
    <property type="organism ID" value="984"/>
</dbReference>
<dbReference type="Reactome" id="R-SCE-983168">
    <property type="pathway name" value="Antigen processing: Ubiquitination &amp; Proteasome degradation"/>
</dbReference>
<dbReference type="UniPathway" id="UPA00143"/>
<dbReference type="BioGRID-ORCS" id="851337">
    <property type="hits" value="0 hits in 10 CRISPR screens"/>
</dbReference>
<dbReference type="EvolutionaryTrace" id="P54860"/>
<dbReference type="PRO" id="PR:P54860"/>
<dbReference type="Proteomes" id="UP000002311">
    <property type="component" value="Chromosome IV"/>
</dbReference>
<dbReference type="RNAct" id="P54860">
    <property type="molecule type" value="protein"/>
</dbReference>
<dbReference type="GO" id="GO:0005737">
    <property type="term" value="C:cytoplasm"/>
    <property type="evidence" value="ECO:0007005"/>
    <property type="project" value="SGD"/>
</dbReference>
<dbReference type="GO" id="GO:0005634">
    <property type="term" value="C:nucleus"/>
    <property type="evidence" value="ECO:0000314"/>
    <property type="project" value="SGD"/>
</dbReference>
<dbReference type="GO" id="GO:0000151">
    <property type="term" value="C:ubiquitin ligase complex"/>
    <property type="evidence" value="ECO:0007669"/>
    <property type="project" value="InterPro"/>
</dbReference>
<dbReference type="GO" id="GO:0034450">
    <property type="term" value="F:ubiquitin-ubiquitin ligase activity"/>
    <property type="evidence" value="ECO:0000314"/>
    <property type="project" value="SGD"/>
</dbReference>
<dbReference type="GO" id="GO:0071361">
    <property type="term" value="P:cellular response to ethanol"/>
    <property type="evidence" value="ECO:0000314"/>
    <property type="project" value="SGD"/>
</dbReference>
<dbReference type="GO" id="GO:0036503">
    <property type="term" value="P:ERAD pathway"/>
    <property type="evidence" value="ECO:0000315"/>
    <property type="project" value="SGD"/>
</dbReference>
<dbReference type="GO" id="GO:0031398">
    <property type="term" value="P:positive regulation of protein ubiquitination"/>
    <property type="evidence" value="ECO:0000315"/>
    <property type="project" value="SGD"/>
</dbReference>
<dbReference type="GO" id="GO:0070936">
    <property type="term" value="P:protein K48-linked ubiquitination"/>
    <property type="evidence" value="ECO:0000314"/>
    <property type="project" value="SGD"/>
</dbReference>
<dbReference type="GO" id="GO:0000209">
    <property type="term" value="P:protein polyubiquitination"/>
    <property type="evidence" value="ECO:0000318"/>
    <property type="project" value="GO_Central"/>
</dbReference>
<dbReference type="GO" id="GO:0016567">
    <property type="term" value="P:protein ubiquitination"/>
    <property type="evidence" value="ECO:0000314"/>
    <property type="project" value="SGD"/>
</dbReference>
<dbReference type="GO" id="GO:0006511">
    <property type="term" value="P:ubiquitin-dependent protein catabolic process"/>
    <property type="evidence" value="ECO:0000315"/>
    <property type="project" value="SGD"/>
</dbReference>
<dbReference type="CDD" id="cd16657">
    <property type="entry name" value="RING-Ubox_UBE4A"/>
    <property type="match status" value="1"/>
</dbReference>
<dbReference type="FunFam" id="3.30.40.10:FF:000055">
    <property type="entry name" value="Ubiquitin conjugation factor e4 a"/>
    <property type="match status" value="1"/>
</dbReference>
<dbReference type="Gene3D" id="3.30.40.10">
    <property type="entry name" value="Zinc/RING finger domain, C3HC4 (zinc finger)"/>
    <property type="match status" value="1"/>
</dbReference>
<dbReference type="InterPro" id="IPR019474">
    <property type="entry name" value="Ub_conjug_fac_E4_core"/>
</dbReference>
<dbReference type="InterPro" id="IPR045132">
    <property type="entry name" value="UBE4"/>
</dbReference>
<dbReference type="InterPro" id="IPR003613">
    <property type="entry name" value="Ubox_domain"/>
</dbReference>
<dbReference type="InterPro" id="IPR013083">
    <property type="entry name" value="Znf_RING/FYVE/PHD"/>
</dbReference>
<dbReference type="PANTHER" id="PTHR13931:SF2">
    <property type="entry name" value="UBIQUITIN CONJUGATION FACTOR E4 B"/>
    <property type="match status" value="1"/>
</dbReference>
<dbReference type="PANTHER" id="PTHR13931">
    <property type="entry name" value="UBIQUITINATION FACTOR E4"/>
    <property type="match status" value="1"/>
</dbReference>
<dbReference type="Pfam" id="PF04564">
    <property type="entry name" value="U-box"/>
    <property type="match status" value="1"/>
</dbReference>
<dbReference type="Pfam" id="PF10408">
    <property type="entry name" value="Ufd2P_core"/>
    <property type="match status" value="1"/>
</dbReference>
<dbReference type="SMART" id="SM00504">
    <property type="entry name" value="Ubox"/>
    <property type="match status" value="1"/>
</dbReference>
<dbReference type="SUPFAM" id="SSF57850">
    <property type="entry name" value="RING/U-box"/>
    <property type="match status" value="1"/>
</dbReference>
<dbReference type="PROSITE" id="PS51698">
    <property type="entry name" value="U_BOX"/>
    <property type="match status" value="1"/>
</dbReference>
<protein>
    <recommendedName>
        <fullName>E4 ubiquitin-protein ligase UFD2</fullName>
        <ecNumber evidence="1">2.3.2.27</ecNumber>
    </recommendedName>
    <alternativeName>
        <fullName>RING-type E3 ubiquitin transferase UFD2</fullName>
    </alternativeName>
    <alternativeName>
        <fullName>Ubiquitin conjugation factor E4</fullName>
    </alternativeName>
    <alternativeName>
        <fullName>Ubiquitin fusion degradation protein 2</fullName>
        <shortName>UB fusion protein 2</shortName>
    </alternativeName>
</protein>
<sequence length="961" mass="109916">MTAIEDILQITTDPSDTRGYSLLKSEEVPQGSTLGVDFIDTLLLYQLTENEKLDKPFEYLNDCFRRNQQQKRITKNKPNAESLHSTFQEIDRLVIGYGVVALQIENFCMNGAFINYITGIVSNVNSYTDFLSQIIQRAILEGTALDLLNAVFPTLLEYCNKHVSHFDLNESVIYNNVLTIFELFVTFKPIAEIFTKIDGFFADYSCKPQDFERKTILGPILSLSPIEAAVAIRNYGDNLLRSKQQTAMIHESLQAEHKVVIDRLFFIVDKLVRGSLNSRTDMISYFAHIANKNHLRRADHPPFKELSSNGFMSNITLLLVRFSQPFLDISYKKIDKIDANYFNNPSLFIDLSGETRLNSDFKEADAFYDKNRKTADSKPNFISDCFFLTLTYLHYGLGGTLSFEEKMGSEIKALKEEIEKVKKIAANHDVFARFITAQLSKMEKALKTTESLRFALQGFFAHRSLQLEVFDFICGASTFLIRVVDPEHEFPFKQIKLPLIPDQIGVENVDNADFLRAHAPVPFKYYPEFVVEGPVNYSLYISKYQTSPIFRNPRLGSFVEFTTMVLRCPELVSNPHLKGKLVQLLSVGAMPLTDNSPGFMMDIFEHDELVNKNLLYALLDFYVIVEKTGSSSQFYDKFNSRYSISIILEELYYKIPSYKNQLIWQSQNNADFFVRFVARMLNDLTFLLDEGLSNLAEVHNIQNELDNRARGAPPTREEEDKELQTRLASASRQAKSSCGLADKSMKLFEIYSKDIPAAFVTPEIVYRLASMLNYNLESLVGPKCGELKVKDPQSYSFNPKDLLKALTTVYINLSEQSEFISAVAKDERSFNRNLFVRAVDILGRKTGLASPEFIEKLLNFANKAEEQRKADEEEDLEYGDVPDEFLDPLMYTIMKDPVILPASKMNIDRSTIKAHLLSDSTDPFNRMPLKLEDVTPNEELRQKILCFKKQKKEEAKHKASE</sequence>
<organism>
    <name type="scientific">Saccharomyces cerevisiae (strain ATCC 204508 / S288c)</name>
    <name type="common">Baker's yeast</name>
    <dbReference type="NCBI Taxonomy" id="559292"/>
    <lineage>
        <taxon>Eukaryota</taxon>
        <taxon>Fungi</taxon>
        <taxon>Dikarya</taxon>
        <taxon>Ascomycota</taxon>
        <taxon>Saccharomycotina</taxon>
        <taxon>Saccharomycetes</taxon>
        <taxon>Saccharomycetales</taxon>
        <taxon>Saccharomycetaceae</taxon>
        <taxon>Saccharomyces</taxon>
    </lineage>
</organism>
<proteinExistence type="evidence at protein level"/>
<comment type="function">
    <text evidence="1 5 6 9 10">E4 ubiquitin chain-elongation enzyme specifically involved in polyubiquitin chain assembly. Binds to CDC48 and elongates mono- and diubiquitinated ERAD substrates presented by the UFD1-NPL4-CDC48/p97 (UNC) AAA ATPase complex to a chain length of 4 to 6 ubiquitin moieties. Delivers these polyubiquitinated substrates to RAD23 and DSK2, which target them to the proteasome. Has E3 ubiquitin-protein ligase activity, accepting ubiquitin from its cognate E2 ubiquitin-conjugating enzyme UBC4. Enhances ubiquitination at 'Lys-48', but not at 'Lys-29' of the Ub moiety. Promotes ubiquitin chain elongation at 'Lys-48' on the DOA10 substrate PEX29. Also involved in the proteolytic processing of the ER-bound transcription factor SPT23.</text>
</comment>
<comment type="catalytic activity">
    <reaction evidence="1">
        <text>S-ubiquitinyl-[E2 ubiquitin-conjugating enzyme]-L-cysteine + [acceptor protein]-L-lysine = [E2 ubiquitin-conjugating enzyme]-L-cysteine + N(6)-ubiquitinyl-[acceptor protein]-L-lysine.</text>
        <dbReference type="EC" id="2.3.2.27"/>
    </reaction>
</comment>
<comment type="pathway">
    <text evidence="1">Protein modification; protein ubiquitination.</text>
</comment>
<comment type="subunit">
    <text evidence="1 4 7 8 10 11">Interacts with CDC48. Interacts with the ubiquitin-like domain of RAD23 and DSK2. Interacts with PEX29.</text>
</comment>
<comment type="interaction">
    <interactant intactId="EBI-20003">
        <id>P54860</id>
    </interactant>
    <interactant intactId="EBI-4308">
        <id>P25694</id>
        <label>CDC48</label>
    </interactant>
    <organismsDiffer>false</organismsDiffer>
    <experiments>6</experiments>
</comment>
<comment type="interaction">
    <interactant intactId="EBI-20003">
        <id>P54860</id>
    </interactant>
    <interactant intactId="EBI-14668">
        <id>P32628</id>
        <label>RAD23</label>
    </interactant>
    <organismsDiffer>false</organismsDiffer>
    <experiments>7</experiments>
</comment>
<comment type="interaction">
    <interactant intactId="EBI-20003">
        <id>P54860</id>
    </interactant>
    <interactant intactId="EBI-17093">
        <id>P34223</id>
        <label>SHP1</label>
    </interactant>
    <organismsDiffer>false</organismsDiffer>
    <experiments>3</experiments>
</comment>
<comment type="interaction">
    <interactant intactId="EBI-20003">
        <id>P54860</id>
    </interactant>
    <interactant intactId="EBI-20010">
        <id>P33202</id>
        <label>UFD4</label>
    </interactant>
    <organismsDiffer>false</organismsDiffer>
    <experiments>2</experiments>
</comment>
<comment type="subcellular location">
    <subcellularLocation>
        <location evidence="2">Cytoplasm</location>
    </subcellularLocation>
    <subcellularLocation>
        <location evidence="2">Nucleus</location>
    </subcellularLocation>
</comment>
<comment type="domain">
    <text evidence="8">The U-box domain is required for the ubiquitin protein ligase activity.</text>
</comment>
<comment type="miscellaneous">
    <text evidence="3">Present with 2600 molecules/cell in log phase SD medium.</text>
</comment>
<comment type="similarity">
    <text evidence="12">Belongs to the ubiquitin conjugation factor E4 family.</text>
</comment>
<name>UFD2_YEAST</name>
<feature type="chain" id="PRO_0000194997" description="E4 ubiquitin-protein ligase UFD2">
    <location>
        <begin position="1"/>
        <end position="961"/>
    </location>
</feature>
<feature type="domain" description="U-box">
    <location>
        <begin position="880"/>
        <end position="954"/>
    </location>
</feature>
<feature type="sequence conflict" description="In Ref. 2; CAA58257 and 3; CAA98767." evidence="12" ref="2 3">
    <original>L</original>
    <variation>S</variation>
    <location>
        <position position="102"/>
    </location>
</feature>
<feature type="sequence conflict" description="In Ref. 2; CAA58257 and 3; CAA98767." evidence="12" ref="2 3">
    <original>V</original>
    <variation>D</variation>
    <location>
        <position position="677"/>
    </location>
</feature>
<feature type="helix" evidence="14">
    <location>
        <begin position="1"/>
        <end position="8"/>
    </location>
</feature>
<feature type="strand" evidence="14">
    <location>
        <begin position="10"/>
        <end position="13"/>
    </location>
</feature>
<feature type="strand" evidence="14">
    <location>
        <begin position="16"/>
        <end position="19"/>
    </location>
</feature>
<feature type="helix" evidence="15">
    <location>
        <begin position="28"/>
        <end position="30"/>
    </location>
</feature>
<feature type="helix" evidence="14">
    <location>
        <begin position="36"/>
        <end position="38"/>
    </location>
</feature>
<feature type="helix" evidence="14">
    <location>
        <begin position="39"/>
        <end position="48"/>
    </location>
</feature>
<feature type="helix" evidence="14">
    <location>
        <begin position="56"/>
        <end position="75"/>
    </location>
</feature>
<feature type="helix" evidence="14">
    <location>
        <begin position="80"/>
        <end position="83"/>
    </location>
</feature>
<feature type="helix" evidence="14">
    <location>
        <begin position="84"/>
        <end position="101"/>
    </location>
</feature>
<feature type="strand" evidence="14">
    <location>
        <begin position="107"/>
        <end position="110"/>
    </location>
</feature>
<feature type="helix" evidence="14">
    <location>
        <begin position="113"/>
        <end position="122"/>
    </location>
</feature>
<feature type="helix" evidence="14">
    <location>
        <begin position="123"/>
        <end position="126"/>
    </location>
</feature>
<feature type="helix" evidence="14">
    <location>
        <begin position="128"/>
        <end position="141"/>
    </location>
</feature>
<feature type="helix" evidence="14">
    <location>
        <begin position="144"/>
        <end position="161"/>
    </location>
</feature>
<feature type="strand" evidence="14">
    <location>
        <begin position="162"/>
        <end position="164"/>
    </location>
</feature>
<feature type="helix" evidence="14">
    <location>
        <begin position="171"/>
        <end position="185"/>
    </location>
</feature>
<feature type="helix" evidence="14">
    <location>
        <begin position="188"/>
        <end position="193"/>
    </location>
</feature>
<feature type="helix" evidence="14">
    <location>
        <begin position="194"/>
        <end position="196"/>
    </location>
</feature>
<feature type="helix" evidence="14">
    <location>
        <begin position="208"/>
        <end position="210"/>
    </location>
</feature>
<feature type="helix" evidence="14">
    <location>
        <begin position="211"/>
        <end position="214"/>
    </location>
</feature>
<feature type="helix" evidence="14">
    <location>
        <begin position="218"/>
        <end position="221"/>
    </location>
</feature>
<feature type="helix" evidence="14">
    <location>
        <begin position="228"/>
        <end position="234"/>
    </location>
</feature>
<feature type="turn" evidence="14">
    <location>
        <begin position="235"/>
        <end position="237"/>
    </location>
</feature>
<feature type="helix" evidence="14">
    <location>
        <begin position="243"/>
        <end position="274"/>
    </location>
</feature>
<feature type="helix" evidence="14">
    <location>
        <begin position="276"/>
        <end position="291"/>
    </location>
</feature>
<feature type="helix" evidence="14">
    <location>
        <begin position="294"/>
        <end position="297"/>
    </location>
</feature>
<feature type="strand" evidence="14">
    <location>
        <begin position="298"/>
        <end position="300"/>
    </location>
</feature>
<feature type="helix" evidence="14">
    <location>
        <begin position="303"/>
        <end position="305"/>
    </location>
</feature>
<feature type="helix" evidence="14">
    <location>
        <begin position="309"/>
        <end position="323"/>
    </location>
</feature>
<feature type="helix" evidence="14">
    <location>
        <begin position="324"/>
        <end position="327"/>
    </location>
</feature>
<feature type="helix" evidence="14">
    <location>
        <begin position="334"/>
        <end position="336"/>
    </location>
</feature>
<feature type="turn" evidence="14">
    <location>
        <begin position="339"/>
        <end position="343"/>
    </location>
</feature>
<feature type="strand" evidence="14">
    <location>
        <begin position="347"/>
        <end position="349"/>
    </location>
</feature>
<feature type="strand" evidence="14">
    <location>
        <begin position="356"/>
        <end position="358"/>
    </location>
</feature>
<feature type="helix" evidence="14">
    <location>
        <begin position="361"/>
        <end position="371"/>
    </location>
</feature>
<feature type="helix" evidence="14">
    <location>
        <begin position="381"/>
        <end position="395"/>
    </location>
</feature>
<feature type="helix" evidence="14">
    <location>
        <begin position="397"/>
        <end position="405"/>
    </location>
</feature>
<feature type="helix" evidence="14">
    <location>
        <begin position="407"/>
        <end position="421"/>
    </location>
</feature>
<feature type="helix" evidence="14">
    <location>
        <begin position="429"/>
        <end position="460"/>
    </location>
</feature>
<feature type="helix" evidence="14">
    <location>
        <begin position="463"/>
        <end position="484"/>
    </location>
</feature>
<feature type="strand" evidence="13">
    <location>
        <begin position="485"/>
        <end position="487"/>
    </location>
</feature>
<feature type="turn" evidence="13">
    <location>
        <begin position="490"/>
        <end position="492"/>
    </location>
</feature>
<feature type="strand" evidence="13">
    <location>
        <begin position="507"/>
        <end position="509"/>
    </location>
</feature>
<feature type="helix" evidence="14">
    <location>
        <begin position="512"/>
        <end position="517"/>
    </location>
</feature>
<feature type="helix" evidence="14">
    <location>
        <begin position="523"/>
        <end position="525"/>
    </location>
</feature>
<feature type="helix" evidence="14">
    <location>
        <begin position="529"/>
        <end position="541"/>
    </location>
</feature>
<feature type="turn" evidence="14">
    <location>
        <begin position="548"/>
        <end position="551"/>
    </location>
</feature>
<feature type="helix" evidence="14">
    <location>
        <begin position="555"/>
        <end position="567"/>
    </location>
</feature>
<feature type="helix" evidence="14">
    <location>
        <begin position="575"/>
        <end position="589"/>
    </location>
</feature>
<feature type="helix" evidence="14">
    <location>
        <begin position="601"/>
        <end position="606"/>
    </location>
</feature>
<feature type="helix" evidence="14">
    <location>
        <begin position="608"/>
        <end position="624"/>
    </location>
</feature>
<feature type="helix" evidence="14">
    <location>
        <begin position="625"/>
        <end position="627"/>
    </location>
</feature>
<feature type="strand" evidence="14">
    <location>
        <begin position="633"/>
        <end position="635"/>
    </location>
</feature>
<feature type="helix" evidence="14">
    <location>
        <begin position="637"/>
        <end position="654"/>
    </location>
</feature>
<feature type="helix" evidence="14">
    <location>
        <begin position="656"/>
        <end position="668"/>
    </location>
</feature>
<feature type="helix" evidence="14">
    <location>
        <begin position="670"/>
        <end position="706"/>
    </location>
</feature>
<feature type="helix" evidence="14">
    <location>
        <begin position="720"/>
        <end position="754"/>
    </location>
</feature>
<feature type="helix" evidence="14">
    <location>
        <begin position="756"/>
        <end position="759"/>
    </location>
</feature>
<feature type="helix" evidence="14">
    <location>
        <begin position="762"/>
        <end position="780"/>
    </location>
</feature>
<feature type="helix" evidence="14">
    <location>
        <begin position="782"/>
        <end position="785"/>
    </location>
</feature>
<feature type="helix" evidence="14">
    <location>
        <begin position="792"/>
        <end position="795"/>
    </location>
</feature>
<feature type="helix" evidence="14">
    <location>
        <begin position="799"/>
        <end position="812"/>
    </location>
</feature>
<feature type="turn" evidence="14">
    <location>
        <begin position="813"/>
        <end position="815"/>
    </location>
</feature>
<feature type="helix" evidence="14">
    <location>
        <begin position="817"/>
        <end position="825"/>
    </location>
</feature>
<feature type="turn" evidence="14">
    <location>
        <begin position="827"/>
        <end position="829"/>
    </location>
</feature>
<feature type="helix" evidence="14">
    <location>
        <begin position="832"/>
        <end position="842"/>
    </location>
</feature>
<feature type="strand" evidence="13">
    <location>
        <begin position="843"/>
        <end position="846"/>
    </location>
</feature>
<feature type="helix" evidence="14">
    <location>
        <begin position="851"/>
        <end position="878"/>
    </location>
</feature>
<feature type="helix" evidence="14">
    <location>
        <begin position="883"/>
        <end position="885"/>
    </location>
</feature>
<feature type="turn" evidence="14">
    <location>
        <begin position="888"/>
        <end position="890"/>
    </location>
</feature>
<feature type="strand" evidence="14">
    <location>
        <begin position="895"/>
        <end position="899"/>
    </location>
</feature>
<feature type="turn" evidence="14">
    <location>
        <begin position="901"/>
        <end position="903"/>
    </location>
</feature>
<feature type="strand" evidence="14">
    <location>
        <begin position="906"/>
        <end position="908"/>
    </location>
</feature>
<feature type="helix" evidence="14">
    <location>
        <begin position="909"/>
        <end position="916"/>
    </location>
</feature>
<feature type="turn" evidence="14">
    <location>
        <begin position="923"/>
        <end position="925"/>
    </location>
</feature>
<feature type="helix" evidence="14">
    <location>
        <begin position="931"/>
        <end position="933"/>
    </location>
</feature>
<feature type="helix" evidence="14">
    <location>
        <begin position="938"/>
        <end position="952"/>
    </location>
</feature>
<reference key="1">
    <citation type="journal article" date="1995" name="J. Biol. Chem.">
        <title>A proteolytic pathway that recognizes ubiquitin as a degradation signal.</title>
        <authorList>
            <person name="Johnson E.S."/>
            <person name="Ma P.C.M."/>
            <person name="Ota I.M."/>
            <person name="Varshavsky A."/>
        </authorList>
    </citation>
    <scope>NUCLEOTIDE SEQUENCE [GENOMIC DNA]</scope>
    <source>
        <strain>ATCC 204508 / S288c</strain>
    </source>
</reference>
<reference key="2">
    <citation type="journal article" date="1996" name="Yeast">
        <title>The sequence of 23 kb surrounding the SNF3 locus on the left arm of yeast chromosome IV reveals the location of five known genes and characterizes at least six new open reading frames including putative genes for ribosomal protein L35 and a sugar transport protein.</title>
        <authorList>
            <person name="Verhasselt P."/>
            <person name="Voet M."/>
            <person name="Mathys J."/>
            <person name="Volckaert G."/>
        </authorList>
    </citation>
    <scope>NUCLEOTIDE SEQUENCE [GENOMIC DNA]</scope>
    <source>
        <strain>ATCC 96604 / S288c / FY1679</strain>
    </source>
</reference>
<reference key="3">
    <citation type="journal article" date="1997" name="Nature">
        <title>The nucleotide sequence of Saccharomyces cerevisiae chromosome IV.</title>
        <authorList>
            <person name="Jacq C."/>
            <person name="Alt-Moerbe J."/>
            <person name="Andre B."/>
            <person name="Arnold W."/>
            <person name="Bahr A."/>
            <person name="Ballesta J.P.G."/>
            <person name="Bargues M."/>
            <person name="Baron L."/>
            <person name="Becker A."/>
            <person name="Biteau N."/>
            <person name="Bloecker H."/>
            <person name="Blugeon C."/>
            <person name="Boskovic J."/>
            <person name="Brandt P."/>
            <person name="Brueckner M."/>
            <person name="Buitrago M.J."/>
            <person name="Coster F."/>
            <person name="Delaveau T."/>
            <person name="del Rey F."/>
            <person name="Dujon B."/>
            <person name="Eide L.G."/>
            <person name="Garcia-Cantalejo J.M."/>
            <person name="Goffeau A."/>
            <person name="Gomez-Peris A."/>
            <person name="Granotier C."/>
            <person name="Hanemann V."/>
            <person name="Hankeln T."/>
            <person name="Hoheisel J.D."/>
            <person name="Jaeger W."/>
            <person name="Jimenez A."/>
            <person name="Jonniaux J.-L."/>
            <person name="Kraemer C."/>
            <person name="Kuester H."/>
            <person name="Laamanen P."/>
            <person name="Legros Y."/>
            <person name="Louis E.J."/>
            <person name="Moeller-Rieker S."/>
            <person name="Monnet A."/>
            <person name="Moro M."/>
            <person name="Mueller-Auer S."/>
            <person name="Nussbaumer B."/>
            <person name="Paricio N."/>
            <person name="Paulin L."/>
            <person name="Perea J."/>
            <person name="Perez-Alonso M."/>
            <person name="Perez-Ortin J.E."/>
            <person name="Pohl T.M."/>
            <person name="Prydz H."/>
            <person name="Purnelle B."/>
            <person name="Rasmussen S.W."/>
            <person name="Remacha M.A."/>
            <person name="Revuelta J.L."/>
            <person name="Rieger M."/>
            <person name="Salom D."/>
            <person name="Saluz H.P."/>
            <person name="Saiz J.E."/>
            <person name="Saren A.-M."/>
            <person name="Schaefer M."/>
            <person name="Scharfe M."/>
            <person name="Schmidt E.R."/>
            <person name="Schneider C."/>
            <person name="Scholler P."/>
            <person name="Schwarz S."/>
            <person name="Soler-Mira A."/>
            <person name="Urrestarazu L.A."/>
            <person name="Verhasselt P."/>
            <person name="Vissers S."/>
            <person name="Voet M."/>
            <person name="Volckaert G."/>
            <person name="Wagner G."/>
            <person name="Wambutt R."/>
            <person name="Wedler E."/>
            <person name="Wedler H."/>
            <person name="Woelfl S."/>
            <person name="Harris D.E."/>
            <person name="Bowman S."/>
            <person name="Brown D."/>
            <person name="Churcher C.M."/>
            <person name="Connor R."/>
            <person name="Dedman K."/>
            <person name="Gentles S."/>
            <person name="Hamlin N."/>
            <person name="Hunt S."/>
            <person name="Jones L."/>
            <person name="McDonald S."/>
            <person name="Murphy L.D."/>
            <person name="Niblett D."/>
            <person name="Odell C."/>
            <person name="Oliver K."/>
            <person name="Rajandream M.A."/>
            <person name="Richards C."/>
            <person name="Shore L."/>
            <person name="Walsh S.V."/>
            <person name="Barrell B.G."/>
            <person name="Dietrich F.S."/>
            <person name="Mulligan J.T."/>
            <person name="Allen E."/>
            <person name="Araujo R."/>
            <person name="Aviles E."/>
            <person name="Berno A."/>
            <person name="Carpenter J."/>
            <person name="Chen E."/>
            <person name="Cherry J.M."/>
            <person name="Chung E."/>
            <person name="Duncan M."/>
            <person name="Hunicke-Smith S."/>
            <person name="Hyman R.W."/>
            <person name="Komp C."/>
            <person name="Lashkari D."/>
            <person name="Lew H."/>
            <person name="Lin D."/>
            <person name="Mosedale D."/>
            <person name="Nakahara K."/>
            <person name="Namath A."/>
            <person name="Oefner P."/>
            <person name="Oh C."/>
            <person name="Petel F.X."/>
            <person name="Roberts D."/>
            <person name="Schramm S."/>
            <person name="Schroeder M."/>
            <person name="Shogren T."/>
            <person name="Shroff N."/>
            <person name="Winant A."/>
            <person name="Yelton M.A."/>
            <person name="Botstein D."/>
            <person name="Davis R.W."/>
            <person name="Johnston M."/>
            <person name="Andrews S."/>
            <person name="Brinkman R."/>
            <person name="Cooper J."/>
            <person name="Ding H."/>
            <person name="Du Z."/>
            <person name="Favello A."/>
            <person name="Fulton L."/>
            <person name="Gattung S."/>
            <person name="Greco T."/>
            <person name="Hallsworth K."/>
            <person name="Hawkins J."/>
            <person name="Hillier L.W."/>
            <person name="Jier M."/>
            <person name="Johnson D."/>
            <person name="Johnston L."/>
            <person name="Kirsten J."/>
            <person name="Kucaba T."/>
            <person name="Langston Y."/>
            <person name="Latreille P."/>
            <person name="Le T."/>
            <person name="Mardis E."/>
            <person name="Menezes S."/>
            <person name="Miller N."/>
            <person name="Nhan M."/>
            <person name="Pauley A."/>
            <person name="Peluso D."/>
            <person name="Rifkin L."/>
            <person name="Riles L."/>
            <person name="Taich A."/>
            <person name="Trevaskis E."/>
            <person name="Vignati D."/>
            <person name="Wilcox L."/>
            <person name="Wohldman P."/>
            <person name="Vaudin M."/>
            <person name="Wilson R."/>
            <person name="Waterston R."/>
            <person name="Albermann K."/>
            <person name="Hani J."/>
            <person name="Heumann K."/>
            <person name="Kleine K."/>
            <person name="Mewes H.-W."/>
            <person name="Zollner A."/>
            <person name="Zaccaria P."/>
        </authorList>
    </citation>
    <scope>NUCLEOTIDE SEQUENCE [LARGE SCALE GENOMIC DNA]</scope>
    <source>
        <strain>ATCC 204508 / S288c</strain>
    </source>
</reference>
<reference key="4">
    <citation type="journal article" date="2014" name="G3 (Bethesda)">
        <title>The reference genome sequence of Saccharomyces cerevisiae: Then and now.</title>
        <authorList>
            <person name="Engel S.R."/>
            <person name="Dietrich F.S."/>
            <person name="Fisk D.G."/>
            <person name="Binkley G."/>
            <person name="Balakrishnan R."/>
            <person name="Costanzo M.C."/>
            <person name="Dwight S.S."/>
            <person name="Hitz B.C."/>
            <person name="Karra K."/>
            <person name="Nash R.S."/>
            <person name="Weng S."/>
            <person name="Wong E.D."/>
            <person name="Lloyd P."/>
            <person name="Skrzypek M.S."/>
            <person name="Miyasato S.R."/>
            <person name="Simison M."/>
            <person name="Cherry J.M."/>
        </authorList>
    </citation>
    <scope>GENOME REANNOTATION</scope>
    <scope>SEQUENCE REVISION TO 102 AND 677</scope>
    <source>
        <strain>ATCC 204508 / S288c</strain>
    </source>
</reference>
<reference key="5">
    <citation type="journal article" date="1999" name="Cell">
        <title>A novel ubiquitination factor, E4, is involved in multiubiquitin chain assembly.</title>
        <authorList>
            <person name="Koegl M."/>
            <person name="Hoppe T."/>
            <person name="Schlenker S."/>
            <person name="Ulrich H.D."/>
            <person name="Mayer T.U."/>
            <person name="Jentsch S."/>
        </authorList>
    </citation>
    <scope>FUNCTION</scope>
    <scope>INTERACTION WITH CDC48</scope>
</reference>
<reference key="6">
    <citation type="journal article" date="2003" name="Nature">
        <title>Global analysis of protein localization in budding yeast.</title>
        <authorList>
            <person name="Huh W.-K."/>
            <person name="Falvo J.V."/>
            <person name="Gerke L.C."/>
            <person name="Carroll A.S."/>
            <person name="Howson R.W."/>
            <person name="Weissman J.S."/>
            <person name="O'Shea E.K."/>
        </authorList>
    </citation>
    <scope>SUBCELLULAR LOCATION [LARGE SCALE ANALYSIS]</scope>
</reference>
<reference key="7">
    <citation type="journal article" date="2003" name="Nature">
        <title>Global analysis of protein expression in yeast.</title>
        <authorList>
            <person name="Ghaemmaghami S."/>
            <person name="Huh W.-K."/>
            <person name="Bower K."/>
            <person name="Howson R.W."/>
            <person name="Belle A."/>
            <person name="Dephoure N."/>
            <person name="O'Shea E.K."/>
            <person name="Weissman J.S."/>
        </authorList>
    </citation>
    <scope>LEVEL OF PROTEIN EXPRESSION [LARGE SCALE ANALYSIS]</scope>
</reference>
<reference key="8">
    <citation type="journal article" date="2004" name="Biochem. Biophys. Res. Commun.">
        <title>Definitive evidence for Ufd2-catalyzed elongation of the ubiquitin chain through Lys48 linkage.</title>
        <authorList>
            <person name="Saeki Y."/>
            <person name="Tayama Y."/>
            <person name="Toh-e A."/>
            <person name="Yokosawa H."/>
        </authorList>
    </citation>
    <scope>FUNCTION</scope>
</reference>
<reference key="9">
    <citation type="journal article" date="2004" name="Mol. Biol. Cell">
        <title>Multiple interactions of rad23 suggest a mechanism for ubiquitylated substrate delivery important in proteolysis.</title>
        <authorList>
            <person name="Kim I."/>
            <person name="Mi K."/>
            <person name="Rao H."/>
        </authorList>
    </citation>
    <scope>INTERACTION WITH RAD23</scope>
</reference>
<reference key="10">
    <citation type="journal article" date="2005" name="Cell">
        <title>A series of ubiquitin binding factors connects CDC48/p97 to substrate multiubiquitylation and proteasomal targeting.</title>
        <authorList>
            <person name="Richly H."/>
            <person name="Rape M."/>
            <person name="Braun S."/>
            <person name="Rumpf S."/>
            <person name="Hoege C."/>
            <person name="Jentsch S."/>
        </authorList>
    </citation>
    <scope>FUNCTION IN ERAD</scope>
    <scope>FUNCTION IN STP23 PROCESSING</scope>
</reference>
<reference key="11">
    <citation type="journal article" date="2006" name="Mol. Cell">
        <title>Functional division of substrate processing cofactors of the ubiquitin-selective Cdc48 chaperone.</title>
        <authorList>
            <person name="Rumpf S."/>
            <person name="Jentsch S."/>
        </authorList>
    </citation>
    <scope>INTERACTION WITH CDC48</scope>
</reference>
<reference key="12">
    <citation type="journal article" date="2008" name="Cell">
        <title>Dissecting the ER-associated degradation of a misfolded polytopic membrane protein.</title>
        <authorList>
            <person name="Nakatsukasa K."/>
            <person name="Huyer G."/>
            <person name="Michaelis S."/>
            <person name="Brodsky J.L."/>
        </authorList>
    </citation>
    <scope>FUNCTION</scope>
</reference>
<reference key="13">
    <citation type="journal article" date="2010" name="J. Biol. Chem.">
        <title>Ubiquitin chain elongation enzyme Ufd2 regulates a subset of Doa10 substrates.</title>
        <authorList>
            <person name="Liu C."/>
            <person name="van Dyk D."/>
            <person name="Xu P."/>
            <person name="Choe V."/>
            <person name="Pan H."/>
            <person name="Peng J."/>
            <person name="Andrews B."/>
            <person name="Rao H."/>
        </authorList>
    </citation>
    <scope>FUNCTION</scope>
    <scope>INTERACTION WITH PEX29</scope>
</reference>
<reference key="14">
    <citation type="journal article" date="2012" name="Proc. Natl. Acad. Sci. U.S.A.">
        <title>N-terminal acetylome analyses and functional insights of the N-terminal acetyltransferase NatB.</title>
        <authorList>
            <person name="Van Damme P."/>
            <person name="Lasa M."/>
            <person name="Polevoda B."/>
            <person name="Gazquez C."/>
            <person name="Elosegui-Artola A."/>
            <person name="Kim D.S."/>
            <person name="De Juan-Pardo E."/>
            <person name="Demeyer K."/>
            <person name="Hole K."/>
            <person name="Larrea E."/>
            <person name="Timmerman E."/>
            <person name="Prieto J."/>
            <person name="Arnesen T."/>
            <person name="Sherman F."/>
            <person name="Gevaert K."/>
            <person name="Aldabe R."/>
        </authorList>
    </citation>
    <scope>IDENTIFICATION BY MASS SPECTROMETRY [LARGE SCALE ANALYSIS]</scope>
</reference>
<reference key="15">
    <citation type="journal article" date="2007" name="Proc. Natl. Acad. Sci. U.S.A.">
        <title>Structure and function of the yeast U-box-containing ubiquitin ligase Ufd2p.</title>
        <authorList>
            <person name="Tu D."/>
            <person name="Li W."/>
            <person name="Ye Y."/>
            <person name="Brunger A.T."/>
        </authorList>
    </citation>
    <scope>X-RAY CRYSTALLOGRAPHY (2.56 ANGSTROMS)</scope>
    <scope>INTERACTION WITH UBC4</scope>
</reference>
<reference key="16">
    <citation type="journal article" date="2010" name="J. Biol. Chem.">
        <title>The yeast E4 ubiquitin ligase Ufd2 interacts with the ubiquitin-like domains of Rad23 and Dsk2 via a novel and distinct ubiquitin-like binding domain.</title>
        <authorList>
            <person name="Haenzelmann P."/>
            <person name="Stingele J."/>
            <person name="Hofmann K."/>
            <person name="Schindelin H."/>
            <person name="Raasi S."/>
        </authorList>
    </citation>
    <scope>X-RAY CRYSTALLOGRAPHY (2.40 ANGSTROMS) IN COMPLEX WITH DSK2 AND RAD23</scope>
</reference>
<evidence type="ECO:0000269" key="1">
    <source>
    </source>
</evidence>
<evidence type="ECO:0000269" key="2">
    <source>
    </source>
</evidence>
<evidence type="ECO:0000269" key="3">
    <source>
    </source>
</evidence>
<evidence type="ECO:0000269" key="4">
    <source>
    </source>
</evidence>
<evidence type="ECO:0000269" key="5">
    <source>
    </source>
</evidence>
<evidence type="ECO:0000269" key="6">
    <source>
    </source>
</evidence>
<evidence type="ECO:0000269" key="7">
    <source>
    </source>
</evidence>
<evidence type="ECO:0000269" key="8">
    <source>
    </source>
</evidence>
<evidence type="ECO:0000269" key="9">
    <source>
    </source>
</evidence>
<evidence type="ECO:0000269" key="10">
    <source>
    </source>
</evidence>
<evidence type="ECO:0000269" key="11">
    <source>
    </source>
</evidence>
<evidence type="ECO:0000305" key="12"/>
<evidence type="ECO:0007829" key="13">
    <source>
        <dbReference type="PDB" id="2QJ0"/>
    </source>
</evidence>
<evidence type="ECO:0007829" key="14">
    <source>
        <dbReference type="PDB" id="3M62"/>
    </source>
</evidence>
<evidence type="ECO:0007829" key="15">
    <source>
        <dbReference type="PDB" id="3M63"/>
    </source>
</evidence>
<accession>P54860</accession>
<accession>D6VRG3</accession>